<evidence type="ECO:0000250" key="1"/>
<evidence type="ECO:0000255" key="2"/>
<evidence type="ECO:0000256" key="3">
    <source>
        <dbReference type="SAM" id="MobiDB-lite"/>
    </source>
</evidence>
<evidence type="ECO:0000305" key="4"/>
<evidence type="ECO:0007829" key="5">
    <source>
        <dbReference type="PDB" id="5C9N"/>
    </source>
</evidence>
<proteinExistence type="evidence at protein level"/>
<accession>A6NCL1</accession>
<gene>
    <name type="primary">GMNC</name>
    <name type="synonym">GEMC1</name>
</gene>
<name>GEMC1_HUMAN</name>
<feature type="chain" id="PRO_0000346425" description="Geminin coiled-coil domain-containing protein 1">
    <location>
        <begin position="1"/>
        <end position="334"/>
    </location>
</feature>
<feature type="region of interest" description="Disordered" evidence="3">
    <location>
        <begin position="143"/>
        <end position="167"/>
    </location>
</feature>
<feature type="coiled-coil region" evidence="2">
    <location>
        <begin position="82"/>
        <end position="119"/>
    </location>
</feature>
<feature type="helix" evidence="5">
    <location>
        <begin position="70"/>
        <end position="130"/>
    </location>
</feature>
<comment type="function">
    <text evidence="1">Regulator of DNA replication. Promotes initiation of chromosomal DNA replication by mediating TOPBP1- and CDK2-dependent recruitment of CDC45L onto replication origins (By similarity).</text>
</comment>
<comment type="interaction">
    <interactant intactId="EBI-18587381">
        <id>A6NCL1</id>
    </interactant>
    <interactant intactId="EBI-519526">
        <id>P24864</id>
        <label>CCNE1</label>
    </interactant>
    <organismsDiffer>false</organismsDiffer>
    <experiments>3</experiments>
</comment>
<comment type="subcellular location">
    <subcellularLocation>
        <location evidence="1">Nucleus</location>
    </subcellularLocation>
    <text evidence="1">Associates with chromatin during pre-replication complex (pre-RC) formation.</text>
</comment>
<comment type="PTM">
    <text evidence="1">Highly phosphorylated by CDK2; stimulates initiation of DNA replication.</text>
</comment>
<comment type="similarity">
    <text evidence="4">Belongs to the GEMC1 family.</text>
</comment>
<sequence>MNTILPCQDQYFVGGQSYNCPYSTTTSESSVDVSTETWVSFWAAGLLDNRELQQAPQAQESFSDSNFPLPDLCSWEEAQLSSQLYRNKQLQDTLVQKEEELARLHEENNHLRQYLNSALVKCLEEKAKKLLSSDEFSKAYGKFRKGKRKSKEQRYSPAEIPHPKNAKRNLSSEFANCEEQAGPPVDPWVLQTLGLKDLDTIDDTSSANYSALASHPRRVASTFSQFPDDAVDYKNIPREDMPIDYRGDRTTPLHSTATHGEDFHILSQLSNPPVGLKTLPYYTAHVSPNKTEMAFSTSLSPHCNVKTHSFHQGQAFVRRDEEGGWKFTWVPKQS</sequence>
<reference key="1">
    <citation type="journal article" date="2006" name="Nature">
        <title>The DNA sequence, annotation and analysis of human chromosome 3.</title>
        <authorList>
            <person name="Muzny D.M."/>
            <person name="Scherer S.E."/>
            <person name="Kaul R."/>
            <person name="Wang J."/>
            <person name="Yu J."/>
            <person name="Sudbrak R."/>
            <person name="Buhay C.J."/>
            <person name="Chen R."/>
            <person name="Cree A."/>
            <person name="Ding Y."/>
            <person name="Dugan-Rocha S."/>
            <person name="Gill R."/>
            <person name="Gunaratne P."/>
            <person name="Harris R.A."/>
            <person name="Hawes A.C."/>
            <person name="Hernandez J."/>
            <person name="Hodgson A.V."/>
            <person name="Hume J."/>
            <person name="Jackson A."/>
            <person name="Khan Z.M."/>
            <person name="Kovar-Smith C."/>
            <person name="Lewis L.R."/>
            <person name="Lozado R.J."/>
            <person name="Metzker M.L."/>
            <person name="Milosavljevic A."/>
            <person name="Miner G.R."/>
            <person name="Morgan M.B."/>
            <person name="Nazareth L.V."/>
            <person name="Scott G."/>
            <person name="Sodergren E."/>
            <person name="Song X.-Z."/>
            <person name="Steffen D."/>
            <person name="Wei S."/>
            <person name="Wheeler D.A."/>
            <person name="Wright M.W."/>
            <person name="Worley K.C."/>
            <person name="Yuan Y."/>
            <person name="Zhang Z."/>
            <person name="Adams C.Q."/>
            <person name="Ansari-Lari M.A."/>
            <person name="Ayele M."/>
            <person name="Brown M.J."/>
            <person name="Chen G."/>
            <person name="Chen Z."/>
            <person name="Clendenning J."/>
            <person name="Clerc-Blankenburg K.P."/>
            <person name="Chen R."/>
            <person name="Chen Z."/>
            <person name="Davis C."/>
            <person name="Delgado O."/>
            <person name="Dinh H.H."/>
            <person name="Dong W."/>
            <person name="Draper H."/>
            <person name="Ernst S."/>
            <person name="Fu G."/>
            <person name="Gonzalez-Garay M.L."/>
            <person name="Garcia D.K."/>
            <person name="Gillett W."/>
            <person name="Gu J."/>
            <person name="Hao B."/>
            <person name="Haugen E."/>
            <person name="Havlak P."/>
            <person name="He X."/>
            <person name="Hennig S."/>
            <person name="Hu S."/>
            <person name="Huang W."/>
            <person name="Jackson L.R."/>
            <person name="Jacob L.S."/>
            <person name="Kelly S.H."/>
            <person name="Kube M."/>
            <person name="Levy R."/>
            <person name="Li Z."/>
            <person name="Liu B."/>
            <person name="Liu J."/>
            <person name="Liu W."/>
            <person name="Lu J."/>
            <person name="Maheshwari M."/>
            <person name="Nguyen B.-V."/>
            <person name="Okwuonu G.O."/>
            <person name="Palmeiri A."/>
            <person name="Pasternak S."/>
            <person name="Perez L.M."/>
            <person name="Phelps K.A."/>
            <person name="Plopper F.J."/>
            <person name="Qiang B."/>
            <person name="Raymond C."/>
            <person name="Rodriguez R."/>
            <person name="Saenphimmachak C."/>
            <person name="Santibanez J."/>
            <person name="Shen H."/>
            <person name="Shen Y."/>
            <person name="Subramanian S."/>
            <person name="Tabor P.E."/>
            <person name="Verduzco D."/>
            <person name="Waldron L."/>
            <person name="Wang J."/>
            <person name="Wang J."/>
            <person name="Wang Q."/>
            <person name="Williams G.A."/>
            <person name="Wong G.K.-S."/>
            <person name="Yao Z."/>
            <person name="Zhang J."/>
            <person name="Zhang X."/>
            <person name="Zhao G."/>
            <person name="Zhou J."/>
            <person name="Zhou Y."/>
            <person name="Nelson D."/>
            <person name="Lehrach H."/>
            <person name="Reinhardt R."/>
            <person name="Naylor S.L."/>
            <person name="Yang H."/>
            <person name="Olson M."/>
            <person name="Weinstock G."/>
            <person name="Gibbs R.A."/>
        </authorList>
    </citation>
    <scope>NUCLEOTIDE SEQUENCE [LARGE SCALE GENOMIC DNA]</scope>
</reference>
<dbReference type="EMBL" id="AC092952">
    <property type="status" value="NOT_ANNOTATED_CDS"/>
    <property type="molecule type" value="Genomic_DNA"/>
</dbReference>
<dbReference type="CCDS" id="CCDS54697.1"/>
<dbReference type="RefSeq" id="NP_001140158.1">
    <property type="nucleotide sequence ID" value="NM_001146686.3"/>
</dbReference>
<dbReference type="PDB" id="5C9N">
    <property type="method" value="X-ray"/>
    <property type="resolution" value="2.20 A"/>
    <property type="chains" value="A/B=64-148"/>
</dbReference>
<dbReference type="PDBsum" id="5C9N"/>
<dbReference type="SMR" id="A6NCL1"/>
<dbReference type="BioGRID" id="572083">
    <property type="interactions" value="2"/>
</dbReference>
<dbReference type="FunCoup" id="A6NCL1">
    <property type="interactions" value="1158"/>
</dbReference>
<dbReference type="IntAct" id="A6NCL1">
    <property type="interactions" value="1"/>
</dbReference>
<dbReference type="STRING" id="9606.ENSP00000406164"/>
<dbReference type="iPTMnet" id="A6NCL1"/>
<dbReference type="PhosphoSitePlus" id="A6NCL1"/>
<dbReference type="BioMuta" id="GMNC"/>
<dbReference type="jPOST" id="A6NCL1"/>
<dbReference type="PaxDb" id="9606-ENSP00000406164"/>
<dbReference type="PeptideAtlas" id="A6NCL1"/>
<dbReference type="ProteomicsDB" id="842"/>
<dbReference type="Antibodypedia" id="49140">
    <property type="antibodies" value="59 antibodies from 18 providers"/>
</dbReference>
<dbReference type="DNASU" id="647309"/>
<dbReference type="Ensembl" id="ENST00000442080.6">
    <property type="protein sequence ID" value="ENSP00000406164.1"/>
    <property type="gene ID" value="ENSG00000205835.9"/>
</dbReference>
<dbReference type="GeneID" id="647309"/>
<dbReference type="KEGG" id="hsa:647309"/>
<dbReference type="MANE-Select" id="ENST00000442080.6">
    <property type="protein sequence ID" value="ENSP00000406164.1"/>
    <property type="RefSeq nucleotide sequence ID" value="NM_001146686.3"/>
    <property type="RefSeq protein sequence ID" value="NP_001140158.1"/>
</dbReference>
<dbReference type="UCSC" id="uc011bsl.2">
    <property type="organism name" value="human"/>
</dbReference>
<dbReference type="AGR" id="HGNC:40049"/>
<dbReference type="CTD" id="647309"/>
<dbReference type="DisGeNET" id="647309"/>
<dbReference type="GeneCards" id="GMNC"/>
<dbReference type="HGNC" id="HGNC:40049">
    <property type="gene designation" value="GMNC"/>
</dbReference>
<dbReference type="HPA" id="ENSG00000205835">
    <property type="expression patterns" value="Tissue enhanced (choroid plexus, fallopian tube, liver)"/>
</dbReference>
<dbReference type="MIM" id="614448">
    <property type="type" value="gene"/>
</dbReference>
<dbReference type="neXtProt" id="NX_A6NCL1"/>
<dbReference type="OpenTargets" id="ENSG00000205835"/>
<dbReference type="VEuPathDB" id="HostDB:ENSG00000205835"/>
<dbReference type="eggNOG" id="ENOG502RE7T">
    <property type="taxonomic scope" value="Eukaryota"/>
</dbReference>
<dbReference type="GeneTree" id="ENSGT00940000153270"/>
<dbReference type="HOGENOM" id="CLU_071972_0_0_1"/>
<dbReference type="InParanoid" id="A6NCL1"/>
<dbReference type="OMA" id="TRGWRGW"/>
<dbReference type="OrthoDB" id="8923917at2759"/>
<dbReference type="PAN-GO" id="A6NCL1">
    <property type="GO annotations" value="3 GO annotations based on evolutionary models"/>
</dbReference>
<dbReference type="PhylomeDB" id="A6NCL1"/>
<dbReference type="TreeFam" id="TF344118"/>
<dbReference type="PathwayCommons" id="A6NCL1"/>
<dbReference type="SignaLink" id="A6NCL1"/>
<dbReference type="BioGRID-ORCS" id="647309">
    <property type="hits" value="10 hits in 1143 CRISPR screens"/>
</dbReference>
<dbReference type="GenomeRNAi" id="647309"/>
<dbReference type="Pharos" id="A6NCL1">
    <property type="development level" value="Tbio"/>
</dbReference>
<dbReference type="PRO" id="PR:A6NCL1"/>
<dbReference type="Proteomes" id="UP000005640">
    <property type="component" value="Chromosome 3"/>
</dbReference>
<dbReference type="RNAct" id="A6NCL1">
    <property type="molecule type" value="protein"/>
</dbReference>
<dbReference type="Bgee" id="ENSG00000205835">
    <property type="expression patterns" value="Expressed in right uterine tube and 54 other cell types or tissues"/>
</dbReference>
<dbReference type="ExpressionAtlas" id="A6NCL1">
    <property type="expression patterns" value="baseline and differential"/>
</dbReference>
<dbReference type="GO" id="GO:0005576">
    <property type="term" value="C:extracellular region"/>
    <property type="evidence" value="ECO:0007669"/>
    <property type="project" value="GOC"/>
</dbReference>
<dbReference type="GO" id="GO:0005634">
    <property type="term" value="C:nucleus"/>
    <property type="evidence" value="ECO:0000250"/>
    <property type="project" value="UniProtKB"/>
</dbReference>
<dbReference type="GO" id="GO:0003682">
    <property type="term" value="F:chromatin binding"/>
    <property type="evidence" value="ECO:0000250"/>
    <property type="project" value="UniProtKB"/>
</dbReference>
<dbReference type="GO" id="GO:0090660">
    <property type="term" value="P:cerebrospinal fluid circulation"/>
    <property type="evidence" value="ECO:0007669"/>
    <property type="project" value="Ensembl"/>
</dbReference>
<dbReference type="GO" id="GO:0060271">
    <property type="term" value="P:cilium assembly"/>
    <property type="evidence" value="ECO:0007669"/>
    <property type="project" value="Ensembl"/>
</dbReference>
<dbReference type="GO" id="GO:0006260">
    <property type="term" value="P:DNA replication"/>
    <property type="evidence" value="ECO:0007669"/>
    <property type="project" value="UniProtKB-KW"/>
</dbReference>
<dbReference type="GO" id="GO:1903251">
    <property type="term" value="P:multi-ciliated epithelial cell differentiation"/>
    <property type="evidence" value="ECO:0007669"/>
    <property type="project" value="Ensembl"/>
</dbReference>
<dbReference type="GO" id="GO:0035264">
    <property type="term" value="P:multicellular organism growth"/>
    <property type="evidence" value="ECO:0007669"/>
    <property type="project" value="Ensembl"/>
</dbReference>
<dbReference type="GO" id="GO:0045786">
    <property type="term" value="P:negative regulation of cell cycle"/>
    <property type="evidence" value="ECO:0000318"/>
    <property type="project" value="GO_Central"/>
</dbReference>
<dbReference type="GO" id="GO:0030174">
    <property type="term" value="P:regulation of DNA-templated DNA replication initiation"/>
    <property type="evidence" value="ECO:0000318"/>
    <property type="project" value="GO_Central"/>
</dbReference>
<dbReference type="GO" id="GO:0072520">
    <property type="term" value="P:seminiferous tubule development"/>
    <property type="evidence" value="ECO:0007669"/>
    <property type="project" value="Ensembl"/>
</dbReference>
<dbReference type="GO" id="GO:0007338">
    <property type="term" value="P:single fertilization"/>
    <property type="evidence" value="ECO:0007669"/>
    <property type="project" value="Ensembl"/>
</dbReference>
<dbReference type="GO" id="GO:0007283">
    <property type="term" value="P:spermatogenesis"/>
    <property type="evidence" value="ECO:0007669"/>
    <property type="project" value="Ensembl"/>
</dbReference>
<dbReference type="CDD" id="cd22588">
    <property type="entry name" value="GemC1_CC"/>
    <property type="match status" value="1"/>
</dbReference>
<dbReference type="Gene3D" id="1.20.5.1180">
    <property type="entry name" value="Geminin coiled-coil domain"/>
    <property type="match status" value="1"/>
</dbReference>
<dbReference type="PANTHER" id="PTHR13372">
    <property type="entry name" value="GEMININ"/>
    <property type="match status" value="1"/>
</dbReference>
<dbReference type="PANTHER" id="PTHR13372:SF2">
    <property type="entry name" value="GEMININ COILED-COIL DOMAIN-CONTAINING PROTEIN 1"/>
    <property type="match status" value="1"/>
</dbReference>
<protein>
    <recommendedName>
        <fullName>Geminin coiled-coil domain-containing protein 1</fullName>
    </recommendedName>
</protein>
<keyword id="KW-0002">3D-structure</keyword>
<keyword id="KW-0131">Cell cycle</keyword>
<keyword id="KW-0175">Coiled coil</keyword>
<keyword id="KW-0235">DNA replication</keyword>
<keyword id="KW-0539">Nucleus</keyword>
<keyword id="KW-0597">Phosphoprotein</keyword>
<keyword id="KW-1185">Reference proteome</keyword>
<organism>
    <name type="scientific">Homo sapiens</name>
    <name type="common">Human</name>
    <dbReference type="NCBI Taxonomy" id="9606"/>
    <lineage>
        <taxon>Eukaryota</taxon>
        <taxon>Metazoa</taxon>
        <taxon>Chordata</taxon>
        <taxon>Craniata</taxon>
        <taxon>Vertebrata</taxon>
        <taxon>Euteleostomi</taxon>
        <taxon>Mammalia</taxon>
        <taxon>Eutheria</taxon>
        <taxon>Euarchontoglires</taxon>
        <taxon>Primates</taxon>
        <taxon>Haplorrhini</taxon>
        <taxon>Catarrhini</taxon>
        <taxon>Hominidae</taxon>
        <taxon>Homo</taxon>
    </lineage>
</organism>